<keyword id="KW-0413">Isomerase</keyword>
<keyword id="KW-0460">Magnesium</keyword>
<keyword id="KW-0479">Metal-binding</keyword>
<keyword id="KW-0597">Phosphoprotein</keyword>
<keyword id="KW-1185">Reference proteome</keyword>
<proteinExistence type="inferred from homology"/>
<protein>
    <recommendedName>
        <fullName evidence="1">Phosphoglucosamine mutase</fullName>
        <ecNumber evidence="1">5.4.2.10</ecNumber>
    </recommendedName>
</protein>
<reference key="1">
    <citation type="journal article" date="2005" name="Genome Res.">
        <title>Genome sequence of Blochmannia pennsylvanicus indicates parallel evolutionary trends among bacterial mutualists of insects.</title>
        <authorList>
            <person name="Degnan P.H."/>
            <person name="Lazarus A.B."/>
            <person name="Wernegreen J.J."/>
        </authorList>
    </citation>
    <scope>NUCLEOTIDE SEQUENCE [LARGE SCALE GENOMIC DNA]</scope>
    <source>
        <strain>BPEN</strain>
    </source>
</reference>
<sequence length="453" mass="49335">MKRRKYFGTDGIRGKVGSMPITPDFILKLGWAAGKVLSRFSGGRSNYIIIGKDTRISGYMLESALESGLAAAGLSAALTGPMPTPAIAYLTRTFRAEAGIVISASHNPFYDNGIKFFSIKGTKLDNEVEHSIEIELEKCLTCVDPKELGKASRIVDAAGRYIEFCKGTFPAHLSLRKLKIIVDCANGATYHIAPSVFRELGANVTTIACRPNGVNINKECGTTDIRQLRAHVLAKKADLGIAYDGDGDRVIMVDHFGNKVDGDQMLYIIAREKLHCKQLTGGIVGTLMSNMGLVLALKQLNIPFIRSNVGDRCVLAMLKKQGWNIGGENSGHIVLLDKTTTGDGIIVALQVLSAMVNNCVSLHELCNDVSLLPQILVNVYCSSIKSPLESDLVRKETKAVEQELSEQGRVLLRQSGTEPYIRIMVEGNCCYGKILYLANRIASVIRSEIKSIQ</sequence>
<organism>
    <name type="scientific">Blochmanniella pennsylvanica (strain BPEN)</name>
    <dbReference type="NCBI Taxonomy" id="291272"/>
    <lineage>
        <taxon>Bacteria</taxon>
        <taxon>Pseudomonadati</taxon>
        <taxon>Pseudomonadota</taxon>
        <taxon>Gammaproteobacteria</taxon>
        <taxon>Enterobacterales</taxon>
        <taxon>Enterobacteriaceae</taxon>
        <taxon>ant endosymbionts</taxon>
        <taxon>Candidatus Blochmanniella</taxon>
    </lineage>
</organism>
<evidence type="ECO:0000255" key="1">
    <source>
        <dbReference type="HAMAP-Rule" id="MF_01554"/>
    </source>
</evidence>
<feature type="chain" id="PRO_0000147853" description="Phosphoglucosamine mutase">
    <location>
        <begin position="1"/>
        <end position="453"/>
    </location>
</feature>
<feature type="active site" description="Phosphoserine intermediate" evidence="1">
    <location>
        <position position="105"/>
    </location>
</feature>
<feature type="binding site" description="via phosphate group" evidence="1">
    <location>
        <position position="105"/>
    </location>
    <ligand>
        <name>Mg(2+)</name>
        <dbReference type="ChEBI" id="CHEBI:18420"/>
    </ligand>
</feature>
<feature type="binding site" evidence="1">
    <location>
        <position position="244"/>
    </location>
    <ligand>
        <name>Mg(2+)</name>
        <dbReference type="ChEBI" id="CHEBI:18420"/>
    </ligand>
</feature>
<feature type="binding site" evidence="1">
    <location>
        <position position="246"/>
    </location>
    <ligand>
        <name>Mg(2+)</name>
        <dbReference type="ChEBI" id="CHEBI:18420"/>
    </ligand>
</feature>
<feature type="binding site" evidence="1">
    <location>
        <position position="248"/>
    </location>
    <ligand>
        <name>Mg(2+)</name>
        <dbReference type="ChEBI" id="CHEBI:18420"/>
    </ligand>
</feature>
<feature type="modified residue" description="Phosphoserine" evidence="1">
    <location>
        <position position="105"/>
    </location>
</feature>
<dbReference type="EC" id="5.4.2.10" evidence="1"/>
<dbReference type="EMBL" id="CP000016">
    <property type="protein sequence ID" value="AAZ40745.1"/>
    <property type="molecule type" value="Genomic_DNA"/>
</dbReference>
<dbReference type="RefSeq" id="WP_011282652.1">
    <property type="nucleotide sequence ID" value="NC_007292.1"/>
</dbReference>
<dbReference type="SMR" id="Q493U0"/>
<dbReference type="STRING" id="291272.BPEN_103"/>
<dbReference type="KEGG" id="bpn:BPEN_103"/>
<dbReference type="eggNOG" id="COG1109">
    <property type="taxonomic scope" value="Bacteria"/>
</dbReference>
<dbReference type="HOGENOM" id="CLU_016950_7_0_6"/>
<dbReference type="OrthoDB" id="9803322at2"/>
<dbReference type="Proteomes" id="UP000007794">
    <property type="component" value="Chromosome"/>
</dbReference>
<dbReference type="GO" id="GO:0005829">
    <property type="term" value="C:cytosol"/>
    <property type="evidence" value="ECO:0007669"/>
    <property type="project" value="TreeGrafter"/>
</dbReference>
<dbReference type="GO" id="GO:0000287">
    <property type="term" value="F:magnesium ion binding"/>
    <property type="evidence" value="ECO:0007669"/>
    <property type="project" value="UniProtKB-UniRule"/>
</dbReference>
<dbReference type="GO" id="GO:0008966">
    <property type="term" value="F:phosphoglucosamine mutase activity"/>
    <property type="evidence" value="ECO:0007669"/>
    <property type="project" value="UniProtKB-UniRule"/>
</dbReference>
<dbReference type="GO" id="GO:0004615">
    <property type="term" value="F:phosphomannomutase activity"/>
    <property type="evidence" value="ECO:0007669"/>
    <property type="project" value="TreeGrafter"/>
</dbReference>
<dbReference type="GO" id="GO:0005975">
    <property type="term" value="P:carbohydrate metabolic process"/>
    <property type="evidence" value="ECO:0007669"/>
    <property type="project" value="InterPro"/>
</dbReference>
<dbReference type="GO" id="GO:0009252">
    <property type="term" value="P:peptidoglycan biosynthetic process"/>
    <property type="evidence" value="ECO:0007669"/>
    <property type="project" value="TreeGrafter"/>
</dbReference>
<dbReference type="GO" id="GO:0006048">
    <property type="term" value="P:UDP-N-acetylglucosamine biosynthetic process"/>
    <property type="evidence" value="ECO:0007669"/>
    <property type="project" value="TreeGrafter"/>
</dbReference>
<dbReference type="CDD" id="cd05802">
    <property type="entry name" value="GlmM"/>
    <property type="match status" value="1"/>
</dbReference>
<dbReference type="FunFam" id="3.40.120.10:FF:000001">
    <property type="entry name" value="Phosphoglucosamine mutase"/>
    <property type="match status" value="1"/>
</dbReference>
<dbReference type="FunFam" id="3.40.120.10:FF:000003">
    <property type="entry name" value="Phosphoglucosamine mutase"/>
    <property type="match status" value="1"/>
</dbReference>
<dbReference type="Gene3D" id="3.40.120.10">
    <property type="entry name" value="Alpha-D-Glucose-1,6-Bisphosphate, subunit A, domain 3"/>
    <property type="match status" value="3"/>
</dbReference>
<dbReference type="Gene3D" id="3.30.310.50">
    <property type="entry name" value="Alpha-D-phosphohexomutase, C-terminal domain"/>
    <property type="match status" value="1"/>
</dbReference>
<dbReference type="HAMAP" id="MF_01554_B">
    <property type="entry name" value="GlmM_B"/>
    <property type="match status" value="1"/>
</dbReference>
<dbReference type="InterPro" id="IPR005844">
    <property type="entry name" value="A-D-PHexomutase_a/b/a-I"/>
</dbReference>
<dbReference type="InterPro" id="IPR016055">
    <property type="entry name" value="A-D-PHexomutase_a/b/a-I/II/III"/>
</dbReference>
<dbReference type="InterPro" id="IPR005845">
    <property type="entry name" value="A-D-PHexomutase_a/b/a-II"/>
</dbReference>
<dbReference type="InterPro" id="IPR005846">
    <property type="entry name" value="A-D-PHexomutase_a/b/a-III"/>
</dbReference>
<dbReference type="InterPro" id="IPR005843">
    <property type="entry name" value="A-D-PHexomutase_C"/>
</dbReference>
<dbReference type="InterPro" id="IPR036900">
    <property type="entry name" value="A-D-PHexomutase_C_sf"/>
</dbReference>
<dbReference type="InterPro" id="IPR016066">
    <property type="entry name" value="A-D-PHexomutase_CS"/>
</dbReference>
<dbReference type="InterPro" id="IPR005841">
    <property type="entry name" value="Alpha-D-phosphohexomutase_SF"/>
</dbReference>
<dbReference type="InterPro" id="IPR006352">
    <property type="entry name" value="GlmM_bact"/>
</dbReference>
<dbReference type="InterPro" id="IPR050060">
    <property type="entry name" value="Phosphoglucosamine_mutase"/>
</dbReference>
<dbReference type="NCBIfam" id="TIGR01455">
    <property type="entry name" value="glmM"/>
    <property type="match status" value="1"/>
</dbReference>
<dbReference type="NCBIfam" id="NF008139">
    <property type="entry name" value="PRK10887.1"/>
    <property type="match status" value="1"/>
</dbReference>
<dbReference type="PANTHER" id="PTHR42946:SF1">
    <property type="entry name" value="PHOSPHOGLUCOMUTASE (ALPHA-D-GLUCOSE-1,6-BISPHOSPHATE-DEPENDENT)"/>
    <property type="match status" value="1"/>
</dbReference>
<dbReference type="PANTHER" id="PTHR42946">
    <property type="entry name" value="PHOSPHOHEXOSE MUTASE"/>
    <property type="match status" value="1"/>
</dbReference>
<dbReference type="Pfam" id="PF02878">
    <property type="entry name" value="PGM_PMM_I"/>
    <property type="match status" value="1"/>
</dbReference>
<dbReference type="Pfam" id="PF02879">
    <property type="entry name" value="PGM_PMM_II"/>
    <property type="match status" value="1"/>
</dbReference>
<dbReference type="Pfam" id="PF02880">
    <property type="entry name" value="PGM_PMM_III"/>
    <property type="match status" value="1"/>
</dbReference>
<dbReference type="Pfam" id="PF00408">
    <property type="entry name" value="PGM_PMM_IV"/>
    <property type="match status" value="1"/>
</dbReference>
<dbReference type="PRINTS" id="PR00509">
    <property type="entry name" value="PGMPMM"/>
</dbReference>
<dbReference type="SUPFAM" id="SSF55957">
    <property type="entry name" value="Phosphoglucomutase, C-terminal domain"/>
    <property type="match status" value="1"/>
</dbReference>
<dbReference type="SUPFAM" id="SSF53738">
    <property type="entry name" value="Phosphoglucomutase, first 3 domains"/>
    <property type="match status" value="3"/>
</dbReference>
<dbReference type="PROSITE" id="PS00710">
    <property type="entry name" value="PGM_PMM"/>
    <property type="match status" value="1"/>
</dbReference>
<accession>Q493U0</accession>
<comment type="function">
    <text evidence="1">Catalyzes the conversion of glucosamine-6-phosphate to glucosamine-1-phosphate.</text>
</comment>
<comment type="catalytic activity">
    <reaction evidence="1">
        <text>alpha-D-glucosamine 1-phosphate = D-glucosamine 6-phosphate</text>
        <dbReference type="Rhea" id="RHEA:23424"/>
        <dbReference type="ChEBI" id="CHEBI:58516"/>
        <dbReference type="ChEBI" id="CHEBI:58725"/>
        <dbReference type="EC" id="5.4.2.10"/>
    </reaction>
</comment>
<comment type="cofactor">
    <cofactor evidence="1">
        <name>Mg(2+)</name>
        <dbReference type="ChEBI" id="CHEBI:18420"/>
    </cofactor>
    <text evidence="1">Binds 1 Mg(2+) ion per subunit.</text>
</comment>
<comment type="PTM">
    <text evidence="1">Activated by phosphorylation.</text>
</comment>
<comment type="similarity">
    <text evidence="1">Belongs to the phosphohexose mutase family.</text>
</comment>
<name>GLMM_BLOPB</name>
<gene>
    <name evidence="1" type="primary">glmM</name>
    <name type="ordered locus">BPEN_103</name>
</gene>